<organism>
    <name type="scientific">Mycolicibacterium paratuberculosis (strain ATCC BAA-968 / K-10)</name>
    <name type="common">Mycobacterium paratuberculosis</name>
    <dbReference type="NCBI Taxonomy" id="262316"/>
    <lineage>
        <taxon>Bacteria</taxon>
        <taxon>Bacillati</taxon>
        <taxon>Actinomycetota</taxon>
        <taxon>Actinomycetes</taxon>
        <taxon>Mycobacteriales</taxon>
        <taxon>Mycobacteriaceae</taxon>
        <taxon>Mycobacterium</taxon>
        <taxon>Mycobacterium avium complex (MAC)</taxon>
    </lineage>
</organism>
<gene>
    <name evidence="1" type="primary">rlmN</name>
    <name type="ordered locus">MAP_2943c</name>
</gene>
<protein>
    <recommendedName>
        <fullName evidence="1">Probable dual-specificity RNA methyltransferase RlmN</fullName>
        <ecNumber evidence="1">2.1.1.192</ecNumber>
    </recommendedName>
    <alternativeName>
        <fullName evidence="1">23S rRNA (adenine(2503)-C(2))-methyltransferase</fullName>
    </alternativeName>
    <alternativeName>
        <fullName evidence="1">23S rRNA m2A2503 methyltransferase</fullName>
    </alternativeName>
    <alternativeName>
        <fullName evidence="1">Ribosomal RNA large subunit methyltransferase N</fullName>
    </alternativeName>
    <alternativeName>
        <fullName evidence="1">tRNA (adenine(37)-C(2))-methyltransferase</fullName>
    </alternativeName>
    <alternativeName>
        <fullName evidence="1">tRNA m2A37 methyltransferase</fullName>
    </alternativeName>
</protein>
<feature type="chain" id="PRO_0000350263" description="Probable dual-specificity RNA methyltransferase RlmN">
    <location>
        <begin position="1"/>
        <end position="364"/>
    </location>
</feature>
<feature type="domain" description="Radical SAM core" evidence="2">
    <location>
        <begin position="112"/>
        <end position="351"/>
    </location>
</feature>
<feature type="active site" description="Proton acceptor" evidence="1">
    <location>
        <position position="106"/>
    </location>
</feature>
<feature type="active site" description="S-methylcysteine intermediate" evidence="1">
    <location>
        <position position="356"/>
    </location>
</feature>
<feature type="binding site" evidence="1">
    <location>
        <position position="126"/>
    </location>
    <ligand>
        <name>[4Fe-4S] cluster</name>
        <dbReference type="ChEBI" id="CHEBI:49883"/>
        <note>4Fe-4S-S-AdoMet</note>
    </ligand>
</feature>
<feature type="binding site" evidence="1">
    <location>
        <position position="130"/>
    </location>
    <ligand>
        <name>[4Fe-4S] cluster</name>
        <dbReference type="ChEBI" id="CHEBI:49883"/>
        <note>4Fe-4S-S-AdoMet</note>
    </ligand>
</feature>
<feature type="binding site" evidence="1">
    <location>
        <position position="133"/>
    </location>
    <ligand>
        <name>[4Fe-4S] cluster</name>
        <dbReference type="ChEBI" id="CHEBI:49883"/>
        <note>4Fe-4S-S-AdoMet</note>
    </ligand>
</feature>
<feature type="binding site" evidence="1">
    <location>
        <begin position="177"/>
        <end position="178"/>
    </location>
    <ligand>
        <name>S-adenosyl-L-methionine</name>
        <dbReference type="ChEBI" id="CHEBI:59789"/>
    </ligand>
</feature>
<feature type="binding site" evidence="1">
    <location>
        <position position="211"/>
    </location>
    <ligand>
        <name>S-adenosyl-L-methionine</name>
        <dbReference type="ChEBI" id="CHEBI:59789"/>
    </ligand>
</feature>
<feature type="binding site" evidence="1">
    <location>
        <begin position="234"/>
        <end position="236"/>
    </location>
    <ligand>
        <name>S-adenosyl-L-methionine</name>
        <dbReference type="ChEBI" id="CHEBI:59789"/>
    </ligand>
</feature>
<feature type="binding site" evidence="1">
    <location>
        <position position="313"/>
    </location>
    <ligand>
        <name>S-adenosyl-L-methionine</name>
        <dbReference type="ChEBI" id="CHEBI:59789"/>
    </ligand>
</feature>
<feature type="disulfide bond" description="(transient)" evidence="1">
    <location>
        <begin position="119"/>
        <end position="356"/>
    </location>
</feature>
<sequence length="364" mass="39257">MVQQLVFSEPRPGKPPRHLADLDADGRASAVAELGLPAFRAKQLAHQYYGRLIADPRQMTDLPAGLRDAIADTMFPILLTAASEVTCDAGQTRKTLWRALDGVTVESVLMRYPHRNTVCISSQAGCGMACPFCATGQGGLSRNLSTAEILEQVRAGAAALRDDFGDRLSNVVFMGMGEPLANYARVVAAVRRIVAAPPQGFGISARSVTVSTVGLAPAIRKLADERLGVTLALSLHAPDDELRDTLVPVNNRWKIAEALDAARYYADVTGRRVSVEYALIRDVNDQPWRADLLGRRLHRALGPLVHVNLIPLNPTPGSQWDASPKPVEREFVRRVRAAGVSCTVRDTRGREISAACGQLAAEGG</sequence>
<keyword id="KW-0004">4Fe-4S</keyword>
<keyword id="KW-0963">Cytoplasm</keyword>
<keyword id="KW-1015">Disulfide bond</keyword>
<keyword id="KW-0408">Iron</keyword>
<keyword id="KW-0411">Iron-sulfur</keyword>
<keyword id="KW-0479">Metal-binding</keyword>
<keyword id="KW-0489">Methyltransferase</keyword>
<keyword id="KW-1185">Reference proteome</keyword>
<keyword id="KW-0698">rRNA processing</keyword>
<keyword id="KW-0949">S-adenosyl-L-methionine</keyword>
<keyword id="KW-0808">Transferase</keyword>
<keyword id="KW-0819">tRNA processing</keyword>
<dbReference type="EC" id="2.1.1.192" evidence="1"/>
<dbReference type="EMBL" id="AE016958">
    <property type="protein sequence ID" value="AAS05260.1"/>
    <property type="molecule type" value="Genomic_DNA"/>
</dbReference>
<dbReference type="RefSeq" id="WP_003875108.1">
    <property type="nucleotide sequence ID" value="NZ_CP106873.1"/>
</dbReference>
<dbReference type="SMR" id="Q73VR8"/>
<dbReference type="STRING" id="262316.MAP_2943c"/>
<dbReference type="KEGG" id="mpa:MAP_2943c"/>
<dbReference type="eggNOG" id="COG0820">
    <property type="taxonomic scope" value="Bacteria"/>
</dbReference>
<dbReference type="HOGENOM" id="CLU_029101_0_2_11"/>
<dbReference type="Proteomes" id="UP000000580">
    <property type="component" value="Chromosome"/>
</dbReference>
<dbReference type="GO" id="GO:0005737">
    <property type="term" value="C:cytoplasm"/>
    <property type="evidence" value="ECO:0007669"/>
    <property type="project" value="UniProtKB-SubCell"/>
</dbReference>
<dbReference type="GO" id="GO:0051539">
    <property type="term" value="F:4 iron, 4 sulfur cluster binding"/>
    <property type="evidence" value="ECO:0007669"/>
    <property type="project" value="UniProtKB-UniRule"/>
</dbReference>
<dbReference type="GO" id="GO:0046872">
    <property type="term" value="F:metal ion binding"/>
    <property type="evidence" value="ECO:0007669"/>
    <property type="project" value="UniProtKB-KW"/>
</dbReference>
<dbReference type="GO" id="GO:0070040">
    <property type="term" value="F:rRNA (adenine(2503)-C2-)-methyltransferase activity"/>
    <property type="evidence" value="ECO:0007669"/>
    <property type="project" value="UniProtKB-UniRule"/>
</dbReference>
<dbReference type="GO" id="GO:0019843">
    <property type="term" value="F:rRNA binding"/>
    <property type="evidence" value="ECO:0007669"/>
    <property type="project" value="UniProtKB-UniRule"/>
</dbReference>
<dbReference type="GO" id="GO:0002935">
    <property type="term" value="F:tRNA (adenine(37)-C2)-methyltransferase activity"/>
    <property type="evidence" value="ECO:0007669"/>
    <property type="project" value="UniProtKB-UniRule"/>
</dbReference>
<dbReference type="GO" id="GO:0000049">
    <property type="term" value="F:tRNA binding"/>
    <property type="evidence" value="ECO:0007669"/>
    <property type="project" value="UniProtKB-UniRule"/>
</dbReference>
<dbReference type="GO" id="GO:0070475">
    <property type="term" value="P:rRNA base methylation"/>
    <property type="evidence" value="ECO:0007669"/>
    <property type="project" value="UniProtKB-UniRule"/>
</dbReference>
<dbReference type="GO" id="GO:0030488">
    <property type="term" value="P:tRNA methylation"/>
    <property type="evidence" value="ECO:0007669"/>
    <property type="project" value="UniProtKB-UniRule"/>
</dbReference>
<dbReference type="CDD" id="cd01335">
    <property type="entry name" value="Radical_SAM"/>
    <property type="match status" value="1"/>
</dbReference>
<dbReference type="FunFam" id="3.20.20.70:FF:000014">
    <property type="entry name" value="Probable dual-specificity RNA methyltransferase RlmN"/>
    <property type="match status" value="1"/>
</dbReference>
<dbReference type="Gene3D" id="1.10.150.530">
    <property type="match status" value="1"/>
</dbReference>
<dbReference type="Gene3D" id="3.20.20.70">
    <property type="entry name" value="Aldolase class I"/>
    <property type="match status" value="1"/>
</dbReference>
<dbReference type="HAMAP" id="MF_01849">
    <property type="entry name" value="RNA_methyltr_RlmN"/>
    <property type="match status" value="1"/>
</dbReference>
<dbReference type="InterPro" id="IPR013785">
    <property type="entry name" value="Aldolase_TIM"/>
</dbReference>
<dbReference type="InterPro" id="IPR006638">
    <property type="entry name" value="Elp3/MiaA/NifB-like_rSAM"/>
</dbReference>
<dbReference type="InterPro" id="IPR040072">
    <property type="entry name" value="Methyltransferase_A"/>
</dbReference>
<dbReference type="InterPro" id="IPR027492">
    <property type="entry name" value="RNA_MTrfase_RlmN"/>
</dbReference>
<dbReference type="InterPro" id="IPR004383">
    <property type="entry name" value="rRNA_lsu_MTrfase_RlmN/Cfr"/>
</dbReference>
<dbReference type="InterPro" id="IPR007197">
    <property type="entry name" value="rSAM"/>
</dbReference>
<dbReference type="NCBIfam" id="TIGR00048">
    <property type="entry name" value="rRNA_mod_RlmN"/>
    <property type="match status" value="1"/>
</dbReference>
<dbReference type="PANTHER" id="PTHR30544">
    <property type="entry name" value="23S RRNA METHYLTRANSFERASE"/>
    <property type="match status" value="1"/>
</dbReference>
<dbReference type="PANTHER" id="PTHR30544:SF5">
    <property type="entry name" value="RADICAL SAM CORE DOMAIN-CONTAINING PROTEIN"/>
    <property type="match status" value="1"/>
</dbReference>
<dbReference type="Pfam" id="PF04055">
    <property type="entry name" value="Radical_SAM"/>
    <property type="match status" value="1"/>
</dbReference>
<dbReference type="PIRSF" id="PIRSF006004">
    <property type="entry name" value="CHP00048"/>
    <property type="match status" value="1"/>
</dbReference>
<dbReference type="SFLD" id="SFLDF00275">
    <property type="entry name" value="adenosine_C2_methyltransferase"/>
    <property type="match status" value="1"/>
</dbReference>
<dbReference type="SFLD" id="SFLDS00029">
    <property type="entry name" value="Radical_SAM"/>
    <property type="match status" value="1"/>
</dbReference>
<dbReference type="SMART" id="SM00729">
    <property type="entry name" value="Elp3"/>
    <property type="match status" value="1"/>
</dbReference>
<dbReference type="SUPFAM" id="SSF102114">
    <property type="entry name" value="Radical SAM enzymes"/>
    <property type="match status" value="1"/>
</dbReference>
<dbReference type="PROSITE" id="PS51918">
    <property type="entry name" value="RADICAL_SAM"/>
    <property type="match status" value="1"/>
</dbReference>
<comment type="function">
    <text evidence="1">Specifically methylates position 2 of adenine 2503 in 23S rRNA and position 2 of adenine 37 in tRNAs.</text>
</comment>
<comment type="catalytic activity">
    <reaction evidence="1">
        <text>adenosine(2503) in 23S rRNA + 2 reduced [2Fe-2S]-[ferredoxin] + 2 S-adenosyl-L-methionine = 2-methyladenosine(2503) in 23S rRNA + 5'-deoxyadenosine + L-methionine + 2 oxidized [2Fe-2S]-[ferredoxin] + S-adenosyl-L-homocysteine</text>
        <dbReference type="Rhea" id="RHEA:42916"/>
        <dbReference type="Rhea" id="RHEA-COMP:10000"/>
        <dbReference type="Rhea" id="RHEA-COMP:10001"/>
        <dbReference type="Rhea" id="RHEA-COMP:10152"/>
        <dbReference type="Rhea" id="RHEA-COMP:10282"/>
        <dbReference type="ChEBI" id="CHEBI:17319"/>
        <dbReference type="ChEBI" id="CHEBI:33737"/>
        <dbReference type="ChEBI" id="CHEBI:33738"/>
        <dbReference type="ChEBI" id="CHEBI:57844"/>
        <dbReference type="ChEBI" id="CHEBI:57856"/>
        <dbReference type="ChEBI" id="CHEBI:59789"/>
        <dbReference type="ChEBI" id="CHEBI:74411"/>
        <dbReference type="ChEBI" id="CHEBI:74497"/>
        <dbReference type="EC" id="2.1.1.192"/>
    </reaction>
</comment>
<comment type="catalytic activity">
    <reaction evidence="1">
        <text>adenosine(37) in tRNA + 2 reduced [2Fe-2S]-[ferredoxin] + 2 S-adenosyl-L-methionine = 2-methyladenosine(37) in tRNA + 5'-deoxyadenosine + L-methionine + 2 oxidized [2Fe-2S]-[ferredoxin] + S-adenosyl-L-homocysteine</text>
        <dbReference type="Rhea" id="RHEA:43332"/>
        <dbReference type="Rhea" id="RHEA-COMP:10000"/>
        <dbReference type="Rhea" id="RHEA-COMP:10001"/>
        <dbReference type="Rhea" id="RHEA-COMP:10162"/>
        <dbReference type="Rhea" id="RHEA-COMP:10485"/>
        <dbReference type="ChEBI" id="CHEBI:17319"/>
        <dbReference type="ChEBI" id="CHEBI:33737"/>
        <dbReference type="ChEBI" id="CHEBI:33738"/>
        <dbReference type="ChEBI" id="CHEBI:57844"/>
        <dbReference type="ChEBI" id="CHEBI:57856"/>
        <dbReference type="ChEBI" id="CHEBI:59789"/>
        <dbReference type="ChEBI" id="CHEBI:74411"/>
        <dbReference type="ChEBI" id="CHEBI:74497"/>
        <dbReference type="EC" id="2.1.1.192"/>
    </reaction>
</comment>
<comment type="cofactor">
    <cofactor evidence="1">
        <name>[4Fe-4S] cluster</name>
        <dbReference type="ChEBI" id="CHEBI:49883"/>
    </cofactor>
    <text evidence="1">Binds 1 [4Fe-4S] cluster. The cluster is coordinated with 3 cysteines and an exchangeable S-adenosyl-L-methionine.</text>
</comment>
<comment type="subcellular location">
    <subcellularLocation>
        <location evidence="1">Cytoplasm</location>
    </subcellularLocation>
</comment>
<comment type="miscellaneous">
    <text evidence="1">Reaction proceeds by a ping-pong mechanism involving intermediate methylation of a conserved cysteine residue.</text>
</comment>
<comment type="similarity">
    <text evidence="1">Belongs to the radical SAM superfamily. RlmN family.</text>
</comment>
<evidence type="ECO:0000255" key="1">
    <source>
        <dbReference type="HAMAP-Rule" id="MF_01849"/>
    </source>
</evidence>
<evidence type="ECO:0000255" key="2">
    <source>
        <dbReference type="PROSITE-ProRule" id="PRU01266"/>
    </source>
</evidence>
<accession>Q73VR8</accession>
<name>RLMN_MYCPA</name>
<proteinExistence type="inferred from homology"/>
<reference key="1">
    <citation type="journal article" date="2005" name="Proc. Natl. Acad. Sci. U.S.A.">
        <title>The complete genome sequence of Mycobacterium avium subspecies paratuberculosis.</title>
        <authorList>
            <person name="Li L."/>
            <person name="Bannantine J.P."/>
            <person name="Zhang Q."/>
            <person name="Amonsin A."/>
            <person name="May B.J."/>
            <person name="Alt D."/>
            <person name="Banerji N."/>
            <person name="Kanjilal S."/>
            <person name="Kapur V."/>
        </authorList>
    </citation>
    <scope>NUCLEOTIDE SEQUENCE [LARGE SCALE GENOMIC DNA]</scope>
    <source>
        <strain>ATCC BAA-968 / K-10</strain>
    </source>
</reference>